<accession>Q089M8</accession>
<name>RL17_SHEFN</name>
<sequence length="131" mass="14771">MRHRKSGRQLNRNSSHRQAMFRNMACSIVRHEIIKTTVAKAKELRRVVEPLITLAKVDSVANRRLAFARTRDAEVVGKLFTELGPRFQERPGGYTRILKCGLRTGDKAPMAYIELVGRPEAAEAVEVEAAE</sequence>
<feature type="chain" id="PRO_1000055940" description="Large ribosomal subunit protein bL17">
    <location>
        <begin position="1"/>
        <end position="131"/>
    </location>
</feature>
<evidence type="ECO:0000255" key="1">
    <source>
        <dbReference type="HAMAP-Rule" id="MF_01368"/>
    </source>
</evidence>
<evidence type="ECO:0000305" key="2"/>
<dbReference type="EMBL" id="CP000447">
    <property type="protein sequence ID" value="ABI70037.1"/>
    <property type="molecule type" value="Genomic_DNA"/>
</dbReference>
<dbReference type="RefSeq" id="WP_011635664.1">
    <property type="nucleotide sequence ID" value="NC_008345.1"/>
</dbReference>
<dbReference type="SMR" id="Q089M8"/>
<dbReference type="STRING" id="318167.Sfri_0174"/>
<dbReference type="GeneID" id="90572181"/>
<dbReference type="KEGG" id="sfr:Sfri_0174"/>
<dbReference type="eggNOG" id="COG0203">
    <property type="taxonomic scope" value="Bacteria"/>
</dbReference>
<dbReference type="HOGENOM" id="CLU_074407_2_0_6"/>
<dbReference type="OrthoDB" id="9809073at2"/>
<dbReference type="Proteomes" id="UP000000684">
    <property type="component" value="Chromosome"/>
</dbReference>
<dbReference type="GO" id="GO:0022625">
    <property type="term" value="C:cytosolic large ribosomal subunit"/>
    <property type="evidence" value="ECO:0007669"/>
    <property type="project" value="TreeGrafter"/>
</dbReference>
<dbReference type="GO" id="GO:0003735">
    <property type="term" value="F:structural constituent of ribosome"/>
    <property type="evidence" value="ECO:0007669"/>
    <property type="project" value="InterPro"/>
</dbReference>
<dbReference type="GO" id="GO:0006412">
    <property type="term" value="P:translation"/>
    <property type="evidence" value="ECO:0007669"/>
    <property type="project" value="UniProtKB-UniRule"/>
</dbReference>
<dbReference type="FunFam" id="3.90.1030.10:FF:000001">
    <property type="entry name" value="50S ribosomal protein L17"/>
    <property type="match status" value="1"/>
</dbReference>
<dbReference type="Gene3D" id="3.90.1030.10">
    <property type="entry name" value="Ribosomal protein L17"/>
    <property type="match status" value="1"/>
</dbReference>
<dbReference type="HAMAP" id="MF_01368">
    <property type="entry name" value="Ribosomal_bL17"/>
    <property type="match status" value="1"/>
</dbReference>
<dbReference type="InterPro" id="IPR000456">
    <property type="entry name" value="Ribosomal_bL17"/>
</dbReference>
<dbReference type="InterPro" id="IPR047859">
    <property type="entry name" value="Ribosomal_bL17_CS"/>
</dbReference>
<dbReference type="InterPro" id="IPR036373">
    <property type="entry name" value="Ribosomal_bL17_sf"/>
</dbReference>
<dbReference type="NCBIfam" id="TIGR00059">
    <property type="entry name" value="L17"/>
    <property type="match status" value="1"/>
</dbReference>
<dbReference type="PANTHER" id="PTHR14413:SF16">
    <property type="entry name" value="LARGE RIBOSOMAL SUBUNIT PROTEIN BL17M"/>
    <property type="match status" value="1"/>
</dbReference>
<dbReference type="PANTHER" id="PTHR14413">
    <property type="entry name" value="RIBOSOMAL PROTEIN L17"/>
    <property type="match status" value="1"/>
</dbReference>
<dbReference type="Pfam" id="PF01196">
    <property type="entry name" value="Ribosomal_L17"/>
    <property type="match status" value="1"/>
</dbReference>
<dbReference type="SUPFAM" id="SSF64263">
    <property type="entry name" value="Prokaryotic ribosomal protein L17"/>
    <property type="match status" value="1"/>
</dbReference>
<dbReference type="PROSITE" id="PS01167">
    <property type="entry name" value="RIBOSOMAL_L17"/>
    <property type="match status" value="1"/>
</dbReference>
<keyword id="KW-1185">Reference proteome</keyword>
<keyword id="KW-0687">Ribonucleoprotein</keyword>
<keyword id="KW-0689">Ribosomal protein</keyword>
<proteinExistence type="inferred from homology"/>
<comment type="subunit">
    <text evidence="1">Part of the 50S ribosomal subunit. Contacts protein L32.</text>
</comment>
<comment type="similarity">
    <text evidence="1">Belongs to the bacterial ribosomal protein bL17 family.</text>
</comment>
<gene>
    <name evidence="1" type="primary">rplQ</name>
    <name type="ordered locus">Sfri_0174</name>
</gene>
<protein>
    <recommendedName>
        <fullName evidence="1">Large ribosomal subunit protein bL17</fullName>
    </recommendedName>
    <alternativeName>
        <fullName evidence="2">50S ribosomal protein L17</fullName>
    </alternativeName>
</protein>
<organism>
    <name type="scientific">Shewanella frigidimarina (strain NCIMB 400)</name>
    <dbReference type="NCBI Taxonomy" id="318167"/>
    <lineage>
        <taxon>Bacteria</taxon>
        <taxon>Pseudomonadati</taxon>
        <taxon>Pseudomonadota</taxon>
        <taxon>Gammaproteobacteria</taxon>
        <taxon>Alteromonadales</taxon>
        <taxon>Shewanellaceae</taxon>
        <taxon>Shewanella</taxon>
    </lineage>
</organism>
<reference key="1">
    <citation type="submission" date="2006-08" db="EMBL/GenBank/DDBJ databases">
        <title>Complete sequence of Shewanella frigidimarina NCIMB 400.</title>
        <authorList>
            <consortium name="US DOE Joint Genome Institute"/>
            <person name="Copeland A."/>
            <person name="Lucas S."/>
            <person name="Lapidus A."/>
            <person name="Barry K."/>
            <person name="Detter J.C."/>
            <person name="Glavina del Rio T."/>
            <person name="Hammon N."/>
            <person name="Israni S."/>
            <person name="Dalin E."/>
            <person name="Tice H."/>
            <person name="Pitluck S."/>
            <person name="Fredrickson J.K."/>
            <person name="Kolker E."/>
            <person name="McCuel L.A."/>
            <person name="DiChristina T."/>
            <person name="Nealson K.H."/>
            <person name="Newman D."/>
            <person name="Tiedje J.M."/>
            <person name="Zhou J."/>
            <person name="Romine M.F."/>
            <person name="Culley D.E."/>
            <person name="Serres M."/>
            <person name="Chertkov O."/>
            <person name="Brettin T."/>
            <person name="Bruce D."/>
            <person name="Han C."/>
            <person name="Tapia R."/>
            <person name="Gilna P."/>
            <person name="Schmutz J."/>
            <person name="Larimer F."/>
            <person name="Land M."/>
            <person name="Hauser L."/>
            <person name="Kyrpides N."/>
            <person name="Mikhailova N."/>
            <person name="Richardson P."/>
        </authorList>
    </citation>
    <scope>NUCLEOTIDE SEQUENCE [LARGE SCALE GENOMIC DNA]</scope>
    <source>
        <strain>NCIMB 400</strain>
    </source>
</reference>